<accession>A1K717</accession>
<sequence>MQDLQKIIDDAFENRASLSPAAAPAAVRDAVAEVIAGLDAGTLRVAEKKDGQWVVNQWIKKAVLISFRLRDNEVIPAGGLNFFDKVPTKFGDYTPEQFQQGGFRVVPPAVARKGSYIAKNVVLMPSYVNIGAYVDEGTMVDTWATVGSCAQIGKNVHLSGGVGIGGVLEPVQAGPVIIEDNVFVGARSEVVEGVIIEENAVLSMGVYIGQSTKIYDRETGSITYGRVPAGAVVVPGSLPSADGKYSLYCAVIVKKVDAQTRAKTGINELLRGA</sequence>
<comment type="catalytic activity">
    <reaction evidence="1">
        <text>(S)-2,3,4,5-tetrahydrodipicolinate + succinyl-CoA + H2O = (S)-2-succinylamino-6-oxoheptanedioate + CoA</text>
        <dbReference type="Rhea" id="RHEA:17325"/>
        <dbReference type="ChEBI" id="CHEBI:15377"/>
        <dbReference type="ChEBI" id="CHEBI:15685"/>
        <dbReference type="ChEBI" id="CHEBI:16845"/>
        <dbReference type="ChEBI" id="CHEBI:57287"/>
        <dbReference type="ChEBI" id="CHEBI:57292"/>
        <dbReference type="EC" id="2.3.1.117"/>
    </reaction>
</comment>
<comment type="pathway">
    <text evidence="1">Amino-acid biosynthesis; L-lysine biosynthesis via DAP pathway; LL-2,6-diaminopimelate from (S)-tetrahydrodipicolinate (succinylase route): step 1/3.</text>
</comment>
<comment type="subunit">
    <text evidence="1">Homotrimer.</text>
</comment>
<comment type="subcellular location">
    <subcellularLocation>
        <location evidence="1">Cytoplasm</location>
    </subcellularLocation>
</comment>
<comment type="similarity">
    <text evidence="1">Belongs to the transferase hexapeptide repeat family.</text>
</comment>
<name>DAPD_AZOSB</name>
<gene>
    <name evidence="1" type="primary">dapD</name>
    <name type="ordered locus">azo2005</name>
</gene>
<evidence type="ECO:0000255" key="1">
    <source>
        <dbReference type="HAMAP-Rule" id="MF_00811"/>
    </source>
</evidence>
<protein>
    <recommendedName>
        <fullName evidence="1">2,3,4,5-tetrahydropyridine-2,6-dicarboxylate N-succinyltransferase</fullName>
        <ecNumber evidence="1">2.3.1.117</ecNumber>
    </recommendedName>
    <alternativeName>
        <fullName evidence="1">Tetrahydrodipicolinate N-succinyltransferase</fullName>
        <shortName evidence="1">THDP succinyltransferase</shortName>
        <shortName evidence="1">THP succinyltransferase</shortName>
        <shortName evidence="1">Tetrahydropicolinate succinylase</shortName>
    </alternativeName>
</protein>
<proteinExistence type="inferred from homology"/>
<feature type="chain" id="PRO_1000047117" description="2,3,4,5-tetrahydropyridine-2,6-dicarboxylate N-succinyltransferase">
    <location>
        <begin position="1"/>
        <end position="273"/>
    </location>
</feature>
<feature type="binding site" evidence="1">
    <location>
        <position position="104"/>
    </location>
    <ligand>
        <name>substrate</name>
    </ligand>
</feature>
<feature type="binding site" evidence="1">
    <location>
        <position position="141"/>
    </location>
    <ligand>
        <name>substrate</name>
    </ligand>
</feature>
<dbReference type="EC" id="2.3.1.117" evidence="1"/>
<dbReference type="EMBL" id="AM406670">
    <property type="protein sequence ID" value="CAL94622.1"/>
    <property type="molecule type" value="Genomic_DNA"/>
</dbReference>
<dbReference type="RefSeq" id="WP_011765736.1">
    <property type="nucleotide sequence ID" value="NC_008702.1"/>
</dbReference>
<dbReference type="SMR" id="A1K717"/>
<dbReference type="STRING" id="62928.azo2005"/>
<dbReference type="KEGG" id="aoa:dqs_2160"/>
<dbReference type="KEGG" id="azo:azo2005"/>
<dbReference type="eggNOG" id="COG2171">
    <property type="taxonomic scope" value="Bacteria"/>
</dbReference>
<dbReference type="HOGENOM" id="CLU_050859_0_1_4"/>
<dbReference type="OrthoDB" id="9775362at2"/>
<dbReference type="UniPathway" id="UPA00034">
    <property type="reaction ID" value="UER00019"/>
</dbReference>
<dbReference type="Proteomes" id="UP000002588">
    <property type="component" value="Chromosome"/>
</dbReference>
<dbReference type="GO" id="GO:0005737">
    <property type="term" value="C:cytoplasm"/>
    <property type="evidence" value="ECO:0007669"/>
    <property type="project" value="UniProtKB-SubCell"/>
</dbReference>
<dbReference type="GO" id="GO:0008666">
    <property type="term" value="F:2,3,4,5-tetrahydropyridine-2,6-dicarboxylate N-succinyltransferase activity"/>
    <property type="evidence" value="ECO:0007669"/>
    <property type="project" value="UniProtKB-UniRule"/>
</dbReference>
<dbReference type="GO" id="GO:0016779">
    <property type="term" value="F:nucleotidyltransferase activity"/>
    <property type="evidence" value="ECO:0007669"/>
    <property type="project" value="TreeGrafter"/>
</dbReference>
<dbReference type="GO" id="GO:0019877">
    <property type="term" value="P:diaminopimelate biosynthetic process"/>
    <property type="evidence" value="ECO:0007669"/>
    <property type="project" value="UniProtKB-UniRule"/>
</dbReference>
<dbReference type="GO" id="GO:0009089">
    <property type="term" value="P:lysine biosynthetic process via diaminopimelate"/>
    <property type="evidence" value="ECO:0007669"/>
    <property type="project" value="UniProtKB-UniRule"/>
</dbReference>
<dbReference type="CDD" id="cd03350">
    <property type="entry name" value="LbH_THP_succinylT"/>
    <property type="match status" value="1"/>
</dbReference>
<dbReference type="Gene3D" id="2.160.10.10">
    <property type="entry name" value="Hexapeptide repeat proteins"/>
    <property type="match status" value="1"/>
</dbReference>
<dbReference type="Gene3D" id="1.10.166.10">
    <property type="entry name" value="Tetrahydrodipicolinate-N-succinyltransferase, N-terminal domain"/>
    <property type="match status" value="1"/>
</dbReference>
<dbReference type="HAMAP" id="MF_00811">
    <property type="entry name" value="DapD"/>
    <property type="match status" value="1"/>
</dbReference>
<dbReference type="InterPro" id="IPR005664">
    <property type="entry name" value="DapD_Trfase_Hexpep_rpt_fam"/>
</dbReference>
<dbReference type="InterPro" id="IPR001451">
    <property type="entry name" value="Hexapep"/>
</dbReference>
<dbReference type="InterPro" id="IPR018357">
    <property type="entry name" value="Hexapep_transf_CS"/>
</dbReference>
<dbReference type="InterPro" id="IPR023180">
    <property type="entry name" value="THP_succinylTrfase_dom1"/>
</dbReference>
<dbReference type="InterPro" id="IPR037133">
    <property type="entry name" value="THP_succinylTrfase_N_sf"/>
</dbReference>
<dbReference type="InterPro" id="IPR011004">
    <property type="entry name" value="Trimer_LpxA-like_sf"/>
</dbReference>
<dbReference type="NCBIfam" id="TIGR00965">
    <property type="entry name" value="dapD"/>
    <property type="match status" value="1"/>
</dbReference>
<dbReference type="NCBIfam" id="NF008808">
    <property type="entry name" value="PRK11830.1"/>
    <property type="match status" value="1"/>
</dbReference>
<dbReference type="PANTHER" id="PTHR19136:SF52">
    <property type="entry name" value="2,3,4,5-TETRAHYDROPYRIDINE-2,6-DICARBOXYLATE N-SUCCINYLTRANSFERASE"/>
    <property type="match status" value="1"/>
</dbReference>
<dbReference type="PANTHER" id="PTHR19136">
    <property type="entry name" value="MOLYBDENUM COFACTOR GUANYLYLTRANSFERASE"/>
    <property type="match status" value="1"/>
</dbReference>
<dbReference type="Pfam" id="PF14602">
    <property type="entry name" value="Hexapep_2"/>
    <property type="match status" value="1"/>
</dbReference>
<dbReference type="Pfam" id="PF14805">
    <property type="entry name" value="THDPS_N_2"/>
    <property type="match status" value="1"/>
</dbReference>
<dbReference type="SUPFAM" id="SSF51161">
    <property type="entry name" value="Trimeric LpxA-like enzymes"/>
    <property type="match status" value="1"/>
</dbReference>
<dbReference type="PROSITE" id="PS00101">
    <property type="entry name" value="HEXAPEP_TRANSFERASES"/>
    <property type="match status" value="1"/>
</dbReference>
<organism>
    <name type="scientific">Azoarcus sp. (strain BH72)</name>
    <dbReference type="NCBI Taxonomy" id="418699"/>
    <lineage>
        <taxon>Bacteria</taxon>
        <taxon>Pseudomonadati</taxon>
        <taxon>Pseudomonadota</taxon>
        <taxon>Betaproteobacteria</taxon>
        <taxon>Rhodocyclales</taxon>
        <taxon>Zoogloeaceae</taxon>
        <taxon>Azoarcus</taxon>
    </lineage>
</organism>
<keyword id="KW-0012">Acyltransferase</keyword>
<keyword id="KW-0028">Amino-acid biosynthesis</keyword>
<keyword id="KW-0963">Cytoplasm</keyword>
<keyword id="KW-0220">Diaminopimelate biosynthesis</keyword>
<keyword id="KW-0457">Lysine biosynthesis</keyword>
<keyword id="KW-1185">Reference proteome</keyword>
<keyword id="KW-0677">Repeat</keyword>
<keyword id="KW-0808">Transferase</keyword>
<reference key="1">
    <citation type="journal article" date="2006" name="Nat. Biotechnol.">
        <title>Complete genome of the mutualistic, N2-fixing grass endophyte Azoarcus sp. strain BH72.</title>
        <authorList>
            <person name="Krause A."/>
            <person name="Ramakumar A."/>
            <person name="Bartels D."/>
            <person name="Battistoni F."/>
            <person name="Bekel T."/>
            <person name="Boch J."/>
            <person name="Boehm M."/>
            <person name="Friedrich F."/>
            <person name="Hurek T."/>
            <person name="Krause L."/>
            <person name="Linke B."/>
            <person name="McHardy A.C."/>
            <person name="Sarkar A."/>
            <person name="Schneiker S."/>
            <person name="Syed A.A."/>
            <person name="Thauer R."/>
            <person name="Vorhoelter F.-J."/>
            <person name="Weidner S."/>
            <person name="Puehler A."/>
            <person name="Reinhold-Hurek B."/>
            <person name="Kaiser O."/>
            <person name="Goesmann A."/>
        </authorList>
    </citation>
    <scope>NUCLEOTIDE SEQUENCE [LARGE SCALE GENOMIC DNA]</scope>
    <source>
        <strain>BH72</strain>
    </source>
</reference>